<organism>
    <name type="scientific">Shewanella loihica (strain ATCC BAA-1088 / PV-4)</name>
    <dbReference type="NCBI Taxonomy" id="323850"/>
    <lineage>
        <taxon>Bacteria</taxon>
        <taxon>Pseudomonadati</taxon>
        <taxon>Pseudomonadota</taxon>
        <taxon>Gammaproteobacteria</taxon>
        <taxon>Alteromonadales</taxon>
        <taxon>Shewanellaceae</taxon>
        <taxon>Shewanella</taxon>
    </lineage>
</organism>
<feature type="chain" id="PRO_0000304358" description="Leucyl/phenylalanyl-tRNA--protein transferase">
    <location>
        <begin position="1"/>
        <end position="236"/>
    </location>
</feature>
<dbReference type="EC" id="2.3.2.6" evidence="1"/>
<dbReference type="EMBL" id="CP000606">
    <property type="protein sequence ID" value="ABO23436.1"/>
    <property type="molecule type" value="Genomic_DNA"/>
</dbReference>
<dbReference type="RefSeq" id="WP_011865368.1">
    <property type="nucleotide sequence ID" value="NC_009092.1"/>
</dbReference>
<dbReference type="SMR" id="A3QD88"/>
<dbReference type="STRING" id="323850.Shew_1569"/>
<dbReference type="KEGG" id="slo:Shew_1569"/>
<dbReference type="eggNOG" id="COG2360">
    <property type="taxonomic scope" value="Bacteria"/>
</dbReference>
<dbReference type="HOGENOM" id="CLU_075045_0_0_6"/>
<dbReference type="OrthoDB" id="9790282at2"/>
<dbReference type="Proteomes" id="UP000001558">
    <property type="component" value="Chromosome"/>
</dbReference>
<dbReference type="GO" id="GO:0005737">
    <property type="term" value="C:cytoplasm"/>
    <property type="evidence" value="ECO:0007669"/>
    <property type="project" value="UniProtKB-SubCell"/>
</dbReference>
<dbReference type="GO" id="GO:0008914">
    <property type="term" value="F:leucyl-tRNA--protein transferase activity"/>
    <property type="evidence" value="ECO:0007669"/>
    <property type="project" value="UniProtKB-UniRule"/>
</dbReference>
<dbReference type="GO" id="GO:0030163">
    <property type="term" value="P:protein catabolic process"/>
    <property type="evidence" value="ECO:0007669"/>
    <property type="project" value="UniProtKB-UniRule"/>
</dbReference>
<dbReference type="FunFam" id="3.30.70.3550:FF:000001">
    <property type="entry name" value="Leucyl/phenylalanyl-tRNA--protein transferase"/>
    <property type="match status" value="1"/>
</dbReference>
<dbReference type="FunFam" id="3.40.630.70:FF:000001">
    <property type="entry name" value="Leucyl/phenylalanyl-tRNA--protein transferase"/>
    <property type="match status" value="1"/>
</dbReference>
<dbReference type="Gene3D" id="3.40.630.70">
    <property type="entry name" value="Leucyl/phenylalanyl-tRNA-protein transferase, C-terminal domain"/>
    <property type="match status" value="1"/>
</dbReference>
<dbReference type="Gene3D" id="3.30.70.3550">
    <property type="entry name" value="Leucyl/phenylalanyl-tRNA-protein transferase, N-terminal domain"/>
    <property type="match status" value="1"/>
</dbReference>
<dbReference type="HAMAP" id="MF_00688">
    <property type="entry name" value="Leu_Phe_trans"/>
    <property type="match status" value="1"/>
</dbReference>
<dbReference type="InterPro" id="IPR016181">
    <property type="entry name" value="Acyl_CoA_acyltransferase"/>
</dbReference>
<dbReference type="InterPro" id="IPR004616">
    <property type="entry name" value="Leu/Phe-tRNA_Trfase"/>
</dbReference>
<dbReference type="InterPro" id="IPR042203">
    <property type="entry name" value="Leu/Phe-tRNA_Trfase_C"/>
</dbReference>
<dbReference type="InterPro" id="IPR042221">
    <property type="entry name" value="Leu/Phe-tRNA_Trfase_N"/>
</dbReference>
<dbReference type="NCBIfam" id="TIGR00667">
    <property type="entry name" value="aat"/>
    <property type="match status" value="1"/>
</dbReference>
<dbReference type="PANTHER" id="PTHR30098">
    <property type="entry name" value="LEUCYL/PHENYLALANYL-TRNA--PROTEIN TRANSFERASE"/>
    <property type="match status" value="1"/>
</dbReference>
<dbReference type="PANTHER" id="PTHR30098:SF2">
    <property type="entry name" value="LEUCYL_PHENYLALANYL-TRNA--PROTEIN TRANSFERASE"/>
    <property type="match status" value="1"/>
</dbReference>
<dbReference type="Pfam" id="PF03588">
    <property type="entry name" value="Leu_Phe_trans"/>
    <property type="match status" value="1"/>
</dbReference>
<dbReference type="SUPFAM" id="SSF55729">
    <property type="entry name" value="Acyl-CoA N-acyltransferases (Nat)"/>
    <property type="match status" value="1"/>
</dbReference>
<name>LFTR_SHELP</name>
<keyword id="KW-0012">Acyltransferase</keyword>
<keyword id="KW-0963">Cytoplasm</keyword>
<keyword id="KW-1185">Reference proteome</keyword>
<keyword id="KW-0808">Transferase</keyword>
<reference key="1">
    <citation type="submission" date="2007-03" db="EMBL/GenBank/DDBJ databases">
        <title>Complete sequence of Shewanella loihica PV-4.</title>
        <authorList>
            <consortium name="US DOE Joint Genome Institute"/>
            <person name="Copeland A."/>
            <person name="Lucas S."/>
            <person name="Lapidus A."/>
            <person name="Barry K."/>
            <person name="Detter J.C."/>
            <person name="Glavina del Rio T."/>
            <person name="Hammon N."/>
            <person name="Israni S."/>
            <person name="Dalin E."/>
            <person name="Tice H."/>
            <person name="Pitluck S."/>
            <person name="Chain P."/>
            <person name="Malfatti S."/>
            <person name="Shin M."/>
            <person name="Vergez L."/>
            <person name="Schmutz J."/>
            <person name="Larimer F."/>
            <person name="Land M."/>
            <person name="Hauser L."/>
            <person name="Kyrpides N."/>
            <person name="Mikhailova N."/>
            <person name="Romine M.F."/>
            <person name="Serres G."/>
            <person name="Fredrickson J."/>
            <person name="Tiedje J."/>
            <person name="Richardson P."/>
        </authorList>
    </citation>
    <scope>NUCLEOTIDE SEQUENCE [LARGE SCALE GENOMIC DNA]</scope>
    <source>
        <strain>ATCC BAA-1088 / PV-4</strain>
    </source>
</reference>
<evidence type="ECO:0000255" key="1">
    <source>
        <dbReference type="HAMAP-Rule" id="MF_00688"/>
    </source>
</evidence>
<gene>
    <name evidence="1" type="primary">aat</name>
    <name type="ordered locus">Shew_1569</name>
</gene>
<proteinExistence type="inferred from homology"/>
<comment type="function">
    <text evidence="1">Functions in the N-end rule pathway of protein degradation where it conjugates Leu, Phe and, less efficiently, Met from aminoacyl-tRNAs to the N-termini of proteins containing an N-terminal arginine or lysine.</text>
</comment>
<comment type="catalytic activity">
    <reaction evidence="1">
        <text>N-terminal L-lysyl-[protein] + L-leucyl-tRNA(Leu) = N-terminal L-leucyl-L-lysyl-[protein] + tRNA(Leu) + H(+)</text>
        <dbReference type="Rhea" id="RHEA:12340"/>
        <dbReference type="Rhea" id="RHEA-COMP:9613"/>
        <dbReference type="Rhea" id="RHEA-COMP:9622"/>
        <dbReference type="Rhea" id="RHEA-COMP:12670"/>
        <dbReference type="Rhea" id="RHEA-COMP:12671"/>
        <dbReference type="ChEBI" id="CHEBI:15378"/>
        <dbReference type="ChEBI" id="CHEBI:65249"/>
        <dbReference type="ChEBI" id="CHEBI:78442"/>
        <dbReference type="ChEBI" id="CHEBI:78494"/>
        <dbReference type="ChEBI" id="CHEBI:133043"/>
        <dbReference type="EC" id="2.3.2.6"/>
    </reaction>
</comment>
<comment type="catalytic activity">
    <reaction evidence="1">
        <text>N-terminal L-arginyl-[protein] + L-leucyl-tRNA(Leu) = N-terminal L-leucyl-L-arginyl-[protein] + tRNA(Leu) + H(+)</text>
        <dbReference type="Rhea" id="RHEA:50416"/>
        <dbReference type="Rhea" id="RHEA-COMP:9613"/>
        <dbReference type="Rhea" id="RHEA-COMP:9622"/>
        <dbReference type="Rhea" id="RHEA-COMP:12672"/>
        <dbReference type="Rhea" id="RHEA-COMP:12673"/>
        <dbReference type="ChEBI" id="CHEBI:15378"/>
        <dbReference type="ChEBI" id="CHEBI:64719"/>
        <dbReference type="ChEBI" id="CHEBI:78442"/>
        <dbReference type="ChEBI" id="CHEBI:78494"/>
        <dbReference type="ChEBI" id="CHEBI:133044"/>
        <dbReference type="EC" id="2.3.2.6"/>
    </reaction>
</comment>
<comment type="catalytic activity">
    <reaction evidence="1">
        <text>L-phenylalanyl-tRNA(Phe) + an N-terminal L-alpha-aminoacyl-[protein] = an N-terminal L-phenylalanyl-L-alpha-aminoacyl-[protein] + tRNA(Phe)</text>
        <dbReference type="Rhea" id="RHEA:43632"/>
        <dbReference type="Rhea" id="RHEA-COMP:9668"/>
        <dbReference type="Rhea" id="RHEA-COMP:9699"/>
        <dbReference type="Rhea" id="RHEA-COMP:10636"/>
        <dbReference type="Rhea" id="RHEA-COMP:10637"/>
        <dbReference type="ChEBI" id="CHEBI:78442"/>
        <dbReference type="ChEBI" id="CHEBI:78531"/>
        <dbReference type="ChEBI" id="CHEBI:78597"/>
        <dbReference type="ChEBI" id="CHEBI:83561"/>
        <dbReference type="EC" id="2.3.2.6"/>
    </reaction>
</comment>
<comment type="subcellular location">
    <subcellularLocation>
        <location evidence="1">Cytoplasm</location>
    </subcellularLocation>
</comment>
<comment type="similarity">
    <text evidence="1">Belongs to the L/F-transferase family.</text>
</comment>
<protein>
    <recommendedName>
        <fullName evidence="1">Leucyl/phenylalanyl-tRNA--protein transferase</fullName>
        <ecNumber evidence="1">2.3.2.6</ecNumber>
    </recommendedName>
    <alternativeName>
        <fullName evidence="1">L/F-transferase</fullName>
    </alternativeName>
    <alternativeName>
        <fullName evidence="1">Leucyltransferase</fullName>
    </alternativeName>
    <alternativeName>
        <fullName evidence="1">Phenyalanyltransferase</fullName>
    </alternativeName>
</protein>
<sequence length="236" mass="26972">MNSLSYLNHELAKFPSPEFALTDPNGLLAIGGDLHPKRLLNAYYEGIFPWFNENDPILWWSPDPRAVFVPGSLKVSRSLKRDIKRRQWRFSVNRAFNSVIEHCALTRQGKEGTWITLEIQQAYKALHKYNKAHSIEVWDGDKLIGGLYGVAIGQVFCGESMFHLQSNASKAAMAMLHQHLLSHRYRLIDAQVMNPHLASLGAKALKRADFINLLKRFRDIEVASDAWHPQEVQIEL</sequence>
<accession>A3QD88</accession>